<comment type="function">
    <text evidence="1">Involved in protein export. Acts as a chaperone by maintaining the newly synthesized protein in an open conformation. Functions as a peptidyl-prolyl cis-trans isomerase.</text>
</comment>
<comment type="catalytic activity">
    <reaction evidence="1">
        <text>[protein]-peptidylproline (omega=180) = [protein]-peptidylproline (omega=0)</text>
        <dbReference type="Rhea" id="RHEA:16237"/>
        <dbReference type="Rhea" id="RHEA-COMP:10747"/>
        <dbReference type="Rhea" id="RHEA-COMP:10748"/>
        <dbReference type="ChEBI" id="CHEBI:83833"/>
        <dbReference type="ChEBI" id="CHEBI:83834"/>
        <dbReference type="EC" id="5.2.1.8"/>
    </reaction>
</comment>
<comment type="subcellular location">
    <subcellularLocation>
        <location>Cytoplasm</location>
    </subcellularLocation>
    <text evidence="1">About half TF is bound to the ribosome near the polypeptide exit tunnel while the other half is free in the cytoplasm.</text>
</comment>
<comment type="domain">
    <text evidence="1">Consists of 3 domains; the N-terminus binds the ribosome, the middle domain has PPIase activity, while the C-terminus has intrinsic chaperone activity on its own.</text>
</comment>
<comment type="similarity">
    <text evidence="1">Belongs to the FKBP-type PPIase family. Tig subfamily.</text>
</comment>
<feature type="chain" id="PRO_0000179328" description="Trigger factor">
    <location>
        <begin position="1"/>
        <end position="449"/>
    </location>
</feature>
<feature type="domain" description="PPIase FKBP-type" evidence="1">
    <location>
        <begin position="173"/>
        <end position="258"/>
    </location>
</feature>
<name>TIG_BURMA</name>
<evidence type="ECO:0000255" key="1">
    <source>
        <dbReference type="HAMAP-Rule" id="MF_00303"/>
    </source>
</evidence>
<reference key="1">
    <citation type="journal article" date="2004" name="Proc. Natl. Acad. Sci. U.S.A.">
        <title>Structural flexibility in the Burkholderia mallei genome.</title>
        <authorList>
            <person name="Nierman W.C."/>
            <person name="DeShazer D."/>
            <person name="Kim H.S."/>
            <person name="Tettelin H."/>
            <person name="Nelson K.E."/>
            <person name="Feldblyum T.V."/>
            <person name="Ulrich R.L."/>
            <person name="Ronning C.M."/>
            <person name="Brinkac L.M."/>
            <person name="Daugherty S.C."/>
            <person name="Davidsen T.D."/>
            <person name="DeBoy R.T."/>
            <person name="Dimitrov G."/>
            <person name="Dodson R.J."/>
            <person name="Durkin A.S."/>
            <person name="Gwinn M.L."/>
            <person name="Haft D.H."/>
            <person name="Khouri H.M."/>
            <person name="Kolonay J.F."/>
            <person name="Madupu R."/>
            <person name="Mohammoud Y."/>
            <person name="Nelson W.C."/>
            <person name="Radune D."/>
            <person name="Romero C.M."/>
            <person name="Sarria S."/>
            <person name="Selengut J."/>
            <person name="Shamblin C."/>
            <person name="Sullivan S.A."/>
            <person name="White O."/>
            <person name="Yu Y."/>
            <person name="Zafar N."/>
            <person name="Zhou L."/>
            <person name="Fraser C.M."/>
        </authorList>
    </citation>
    <scope>NUCLEOTIDE SEQUENCE [LARGE SCALE GENOMIC DNA]</scope>
    <source>
        <strain>ATCC 23344</strain>
    </source>
</reference>
<accession>Q62JK6</accession>
<sequence>MANVVENLGKLERRVTISLPKDVVQKEIDARIQKLAKNVRMPGFRPGKVPLKMVAQQYAGQVEAEVLSDKIGQEFFTISRAENLRVAGQPSFAPKEDTQQESAYAFDATFEVYPEVKIGDLATAEVERSTTTIGDAEIDRTLDILRKQRVHFHARGEGGEHGDGGADTAAQNGDRVTVDFVGKIDGVAFQGGTAEDFVFVLGEGRMLPEFETAALGLKAGESREFDLKFPDDYHGKDVAGKTAQFTVTLKKVEWPHLPEIDADFAKSLGVEDGDLTKMRAEIKENLEREAKRRTQSIVKNQVMDALLKISELDVPKALIEQDQQRLVEMARQDLAQRGVPNAKDAPIPAEMFADQAERRVKLGLVLAELVKANGLEAKPEQIRAEVDEFAKSYEDPKEVVRWYYSNQQRLAEMEAFVVESNVVDFVLGKAKVTDKEVSFEALASATAQA</sequence>
<protein>
    <recommendedName>
        <fullName evidence="1">Trigger factor</fullName>
        <shortName evidence="1">TF</shortName>
        <ecNumber evidence="1">5.2.1.8</ecNumber>
    </recommendedName>
    <alternativeName>
        <fullName evidence="1">PPIase</fullName>
    </alternativeName>
</protein>
<organism>
    <name type="scientific">Burkholderia mallei (strain ATCC 23344)</name>
    <dbReference type="NCBI Taxonomy" id="243160"/>
    <lineage>
        <taxon>Bacteria</taxon>
        <taxon>Pseudomonadati</taxon>
        <taxon>Pseudomonadota</taxon>
        <taxon>Betaproteobacteria</taxon>
        <taxon>Burkholderiales</taxon>
        <taxon>Burkholderiaceae</taxon>
        <taxon>Burkholderia</taxon>
        <taxon>pseudomallei group</taxon>
    </lineage>
</organism>
<dbReference type="EC" id="5.2.1.8" evidence="1"/>
<dbReference type="EMBL" id="CP000010">
    <property type="protein sequence ID" value="AAU47684.1"/>
    <property type="molecule type" value="Genomic_DNA"/>
</dbReference>
<dbReference type="RefSeq" id="WP_004193941.1">
    <property type="nucleotide sequence ID" value="NC_006348.1"/>
</dbReference>
<dbReference type="RefSeq" id="YP_103113.1">
    <property type="nucleotide sequence ID" value="NC_006348.1"/>
</dbReference>
<dbReference type="SMR" id="Q62JK6"/>
<dbReference type="GeneID" id="92979197"/>
<dbReference type="KEGG" id="bma:BMA1466"/>
<dbReference type="PATRIC" id="fig|243160.12.peg.1506"/>
<dbReference type="eggNOG" id="COG0544">
    <property type="taxonomic scope" value="Bacteria"/>
</dbReference>
<dbReference type="HOGENOM" id="CLU_033058_2_0_4"/>
<dbReference type="Proteomes" id="UP000006693">
    <property type="component" value="Chromosome 1"/>
</dbReference>
<dbReference type="GO" id="GO:0005737">
    <property type="term" value="C:cytoplasm"/>
    <property type="evidence" value="ECO:0007669"/>
    <property type="project" value="UniProtKB-SubCell"/>
</dbReference>
<dbReference type="GO" id="GO:0003755">
    <property type="term" value="F:peptidyl-prolyl cis-trans isomerase activity"/>
    <property type="evidence" value="ECO:0007669"/>
    <property type="project" value="UniProtKB-UniRule"/>
</dbReference>
<dbReference type="GO" id="GO:0044183">
    <property type="term" value="F:protein folding chaperone"/>
    <property type="evidence" value="ECO:0007669"/>
    <property type="project" value="TreeGrafter"/>
</dbReference>
<dbReference type="GO" id="GO:0043022">
    <property type="term" value="F:ribosome binding"/>
    <property type="evidence" value="ECO:0007669"/>
    <property type="project" value="TreeGrafter"/>
</dbReference>
<dbReference type="GO" id="GO:0051083">
    <property type="term" value="P:'de novo' cotranslational protein folding"/>
    <property type="evidence" value="ECO:0007669"/>
    <property type="project" value="TreeGrafter"/>
</dbReference>
<dbReference type="GO" id="GO:0051301">
    <property type="term" value="P:cell division"/>
    <property type="evidence" value="ECO:0007669"/>
    <property type="project" value="UniProtKB-KW"/>
</dbReference>
<dbReference type="GO" id="GO:0061077">
    <property type="term" value="P:chaperone-mediated protein folding"/>
    <property type="evidence" value="ECO:0007669"/>
    <property type="project" value="TreeGrafter"/>
</dbReference>
<dbReference type="GO" id="GO:0015031">
    <property type="term" value="P:protein transport"/>
    <property type="evidence" value="ECO:0007669"/>
    <property type="project" value="UniProtKB-UniRule"/>
</dbReference>
<dbReference type="GO" id="GO:0043335">
    <property type="term" value="P:protein unfolding"/>
    <property type="evidence" value="ECO:0007669"/>
    <property type="project" value="TreeGrafter"/>
</dbReference>
<dbReference type="FunFam" id="3.10.50.40:FF:000001">
    <property type="entry name" value="Trigger factor"/>
    <property type="match status" value="1"/>
</dbReference>
<dbReference type="Gene3D" id="3.10.50.40">
    <property type="match status" value="1"/>
</dbReference>
<dbReference type="Gene3D" id="3.30.70.1050">
    <property type="entry name" value="Trigger factor ribosome-binding domain"/>
    <property type="match status" value="1"/>
</dbReference>
<dbReference type="Gene3D" id="1.10.3120.10">
    <property type="entry name" value="Trigger factor, C-terminal domain"/>
    <property type="match status" value="1"/>
</dbReference>
<dbReference type="HAMAP" id="MF_00303">
    <property type="entry name" value="Trigger_factor_Tig"/>
    <property type="match status" value="1"/>
</dbReference>
<dbReference type="InterPro" id="IPR046357">
    <property type="entry name" value="PPIase_dom_sf"/>
</dbReference>
<dbReference type="InterPro" id="IPR001179">
    <property type="entry name" value="PPIase_FKBP_dom"/>
</dbReference>
<dbReference type="InterPro" id="IPR005215">
    <property type="entry name" value="Trig_fac"/>
</dbReference>
<dbReference type="InterPro" id="IPR008880">
    <property type="entry name" value="Trigger_fac_C"/>
</dbReference>
<dbReference type="InterPro" id="IPR037041">
    <property type="entry name" value="Trigger_fac_C_sf"/>
</dbReference>
<dbReference type="InterPro" id="IPR008881">
    <property type="entry name" value="Trigger_fac_ribosome-bd_bac"/>
</dbReference>
<dbReference type="InterPro" id="IPR036611">
    <property type="entry name" value="Trigger_fac_ribosome-bd_sf"/>
</dbReference>
<dbReference type="InterPro" id="IPR027304">
    <property type="entry name" value="Trigger_fact/SurA_dom_sf"/>
</dbReference>
<dbReference type="NCBIfam" id="TIGR00115">
    <property type="entry name" value="tig"/>
    <property type="match status" value="1"/>
</dbReference>
<dbReference type="PANTHER" id="PTHR30560">
    <property type="entry name" value="TRIGGER FACTOR CHAPERONE AND PEPTIDYL-PROLYL CIS/TRANS ISOMERASE"/>
    <property type="match status" value="1"/>
</dbReference>
<dbReference type="PANTHER" id="PTHR30560:SF3">
    <property type="entry name" value="TRIGGER FACTOR-LIKE PROTEIN TIG, CHLOROPLASTIC"/>
    <property type="match status" value="1"/>
</dbReference>
<dbReference type="Pfam" id="PF00254">
    <property type="entry name" value="FKBP_C"/>
    <property type="match status" value="1"/>
</dbReference>
<dbReference type="Pfam" id="PF05698">
    <property type="entry name" value="Trigger_C"/>
    <property type="match status" value="1"/>
</dbReference>
<dbReference type="Pfam" id="PF05697">
    <property type="entry name" value="Trigger_N"/>
    <property type="match status" value="1"/>
</dbReference>
<dbReference type="PIRSF" id="PIRSF003095">
    <property type="entry name" value="Trigger_factor"/>
    <property type="match status" value="1"/>
</dbReference>
<dbReference type="SUPFAM" id="SSF54534">
    <property type="entry name" value="FKBP-like"/>
    <property type="match status" value="1"/>
</dbReference>
<dbReference type="SUPFAM" id="SSF109998">
    <property type="entry name" value="Triger factor/SurA peptide-binding domain-like"/>
    <property type="match status" value="1"/>
</dbReference>
<dbReference type="SUPFAM" id="SSF102735">
    <property type="entry name" value="Trigger factor ribosome-binding domain"/>
    <property type="match status" value="1"/>
</dbReference>
<dbReference type="PROSITE" id="PS50059">
    <property type="entry name" value="FKBP_PPIASE"/>
    <property type="match status" value="1"/>
</dbReference>
<keyword id="KW-0131">Cell cycle</keyword>
<keyword id="KW-0132">Cell division</keyword>
<keyword id="KW-0143">Chaperone</keyword>
<keyword id="KW-0963">Cytoplasm</keyword>
<keyword id="KW-0413">Isomerase</keyword>
<keyword id="KW-1185">Reference proteome</keyword>
<keyword id="KW-0697">Rotamase</keyword>
<gene>
    <name evidence="1" type="primary">tig</name>
    <name type="ordered locus">BMA1466</name>
</gene>
<proteinExistence type="inferred from homology"/>